<feature type="chain" id="PRO_0000395849" description="E3 ubiquitin-protein ligase SopA">
    <location>
        <begin position="1"/>
        <end position="782"/>
    </location>
</feature>
<feature type="region of interest" description="Disordered" evidence="3">
    <location>
        <begin position="140"/>
        <end position="170"/>
    </location>
</feature>
<feature type="compositionally biased region" description="Low complexity" evidence="3">
    <location>
        <begin position="157"/>
        <end position="170"/>
    </location>
</feature>
<feature type="active site" description="Glycyl thioester intermediate" evidence="1">
    <location>
        <position position="753"/>
    </location>
</feature>
<dbReference type="EC" id="2.3.2.26"/>
<dbReference type="EMBL" id="CP001138">
    <property type="protein sequence ID" value="ACH48508.1"/>
    <property type="molecule type" value="Genomic_DNA"/>
</dbReference>
<dbReference type="RefSeq" id="WP_000703987.1">
    <property type="nucleotide sequence ID" value="NC_011149.1"/>
</dbReference>
<dbReference type="SMR" id="B5EX33"/>
<dbReference type="KEGG" id="sea:SeAg_B2190"/>
<dbReference type="HOGENOM" id="CLU_026158_0_0_6"/>
<dbReference type="Proteomes" id="UP000008819">
    <property type="component" value="Chromosome"/>
</dbReference>
<dbReference type="GO" id="GO:0005576">
    <property type="term" value="C:extracellular region"/>
    <property type="evidence" value="ECO:0000250"/>
    <property type="project" value="UniProtKB"/>
</dbReference>
<dbReference type="GO" id="GO:0043657">
    <property type="term" value="C:host cell"/>
    <property type="evidence" value="ECO:0007669"/>
    <property type="project" value="UniProtKB-SubCell"/>
</dbReference>
<dbReference type="GO" id="GO:0004842">
    <property type="term" value="F:ubiquitin-protein transferase activity"/>
    <property type="evidence" value="ECO:0000250"/>
    <property type="project" value="UniProtKB"/>
</dbReference>
<dbReference type="GO" id="GO:0016567">
    <property type="term" value="P:protein ubiquitination"/>
    <property type="evidence" value="ECO:0000250"/>
    <property type="project" value="UniProtKB"/>
</dbReference>
<dbReference type="FunFam" id="1.10.4140.10:FF:000001">
    <property type="entry name" value="SPI-1 type III secretion system effector HECT-type E3 ubiquitin transferase SopA"/>
    <property type="match status" value="1"/>
</dbReference>
<dbReference type="FunFam" id="1.25.40.300:FF:000001">
    <property type="entry name" value="SPI-1 type III secretion system effector HECT-type E3 ubiquitin transferase SopA"/>
    <property type="match status" value="1"/>
</dbReference>
<dbReference type="FunFam" id="2.160.20.80:FF:000005">
    <property type="entry name" value="SPI-1 type III secretion system effector HECT-type E3 ubiquitin transferase SopA"/>
    <property type="match status" value="1"/>
</dbReference>
<dbReference type="Gene3D" id="2.160.20.80">
    <property type="entry name" value="E3 ubiquitin-protein ligase SopA"/>
    <property type="match status" value="1"/>
</dbReference>
<dbReference type="Gene3D" id="1.10.4140.10">
    <property type="entry name" value="effector protein (NleL)"/>
    <property type="match status" value="1"/>
</dbReference>
<dbReference type="Gene3D" id="3.40.1850.10">
    <property type="entry name" value="HECT-like ubiquitin ligase"/>
    <property type="match status" value="1"/>
</dbReference>
<dbReference type="Gene3D" id="1.25.40.300">
    <property type="entry name" value="Putative secreted effector protein"/>
    <property type="match status" value="1"/>
</dbReference>
<dbReference type="InterPro" id="IPR025725">
    <property type="entry name" value="SopA-like_cat"/>
</dbReference>
<dbReference type="InterPro" id="IPR038270">
    <property type="entry name" value="SopA-like_catalytic_sf"/>
</dbReference>
<dbReference type="InterPro" id="IPR025726">
    <property type="entry name" value="SopA-like_central"/>
</dbReference>
<dbReference type="NCBIfam" id="NF011904">
    <property type="entry name" value="PRK15377.1"/>
    <property type="match status" value="1"/>
</dbReference>
<dbReference type="Pfam" id="PF13981">
    <property type="entry name" value="SopA"/>
    <property type="match status" value="1"/>
</dbReference>
<dbReference type="Pfam" id="PF13979">
    <property type="entry name" value="SopA_C"/>
    <property type="match status" value="1"/>
</dbReference>
<dbReference type="SUPFAM" id="SSF141571">
    <property type="entry name" value="Pentapeptide repeat-like"/>
    <property type="match status" value="1"/>
</dbReference>
<proteinExistence type="inferred from homology"/>
<gene>
    <name type="primary">sopA</name>
    <name type="ordered locus">SeAg_B2190</name>
</gene>
<sequence>MKISSGAINFSTIPNQVKKLITSIREHTKNGFASKITSVKNTHASLNEKLKTGKSSSIEFALPQKIKDFFQPKDKNTLNKTLITVKNIKDTNNAGKKNISAEDVSKMNAAFMRKHIANQTCDYNYRVTGAAPLPGGVSVSANNRPTVSEGRTPPVSPSLSLQATSSPSSPAEWAKKLTDALLRQKAGETLTAADRDFSNADFRNITFSKILPTSFMKRDGDIIKGFNFSNSKFTYSDISHLHFDECRFTYSTLSDVVCSNTKFSNSDMNELTLQYSITTRQQPSFINTTLKNTFIRHKANLSGVILNEPDNSSPPSVSGGGNFIRLGDIWLQMPLLWSENAVDGFLNHEHNNGKSILMTIDSLPDKYSQEKVRAMEDLVKSLRGGRLTEACIRPVESSLVSVLAHPPYTQSALISEWLGPVQERFFAHQCQTYNDVPLPAPDTYYQQRILPVLLDSFDRNSAAMTTHSGLFNQVILHCMTGVDCTDGTRQKAAALYEQYLAHPAVSPHIHNGLFGNYDGSPDWTTRAADNFLLLSSQDSDTAMMLSTDTLLTMLNPTPDTAWDNFYLLRAGENVSTAQISPVELFRHDFPVFLAAFNQQATQRRFGELIDIILSTEEHGELNQQFIAATNQKHSTVKLIDDASVSRLATIFDPLLPEGKLSPAHYQHILSAYHLTDATPQKQAETLFCLSTAFARYSSSAIFGTEHDSPPALRGYAEALMQKAWELSPAIFPSSEQFTEWSDRFHGLHGAFTCTSVVADSMQRHARKYFPSVLSSILPLAWA</sequence>
<evidence type="ECO:0000250" key="1"/>
<evidence type="ECO:0000250" key="2">
    <source>
        <dbReference type="UniProtKB" id="Q8ZNR3"/>
    </source>
</evidence>
<evidence type="ECO:0000256" key="3">
    <source>
        <dbReference type="SAM" id="MobiDB-lite"/>
    </source>
</evidence>
<evidence type="ECO:0000305" key="4"/>
<reference key="1">
    <citation type="journal article" date="2011" name="J. Bacteriol.">
        <title>Comparative genomics of 28 Salmonella enterica isolates: evidence for CRISPR-mediated adaptive sublineage evolution.</title>
        <authorList>
            <person name="Fricke W.F."/>
            <person name="Mammel M.K."/>
            <person name="McDermott P.F."/>
            <person name="Tartera C."/>
            <person name="White D.G."/>
            <person name="Leclerc J.E."/>
            <person name="Ravel J."/>
            <person name="Cebula T.A."/>
        </authorList>
    </citation>
    <scope>NUCLEOTIDE SEQUENCE [LARGE SCALE GENOMIC DNA]</scope>
    <source>
        <strain>SL483</strain>
    </source>
</reference>
<comment type="function">
    <text evidence="2">Effector proteins function to alter host cell physiology and promote bacterial survival in host tissues. This protein is an E3 ubiquitin ligase that interferes with host's ubiquitination pathway.</text>
</comment>
<comment type="catalytic activity">
    <reaction>
        <text>S-ubiquitinyl-[E2 ubiquitin-conjugating enzyme]-L-cysteine + [acceptor protein]-L-lysine = [E2 ubiquitin-conjugating enzyme]-L-cysteine + N(6)-ubiquitinyl-[acceptor protein]-L-lysine.</text>
        <dbReference type="EC" id="2.3.2.26"/>
    </reaction>
</comment>
<comment type="subcellular location">
    <subcellularLocation>
        <location evidence="2">Secreted</location>
    </subcellularLocation>
    <subcellularLocation>
        <location evidence="2">Host cell</location>
    </subcellularLocation>
    <text evidence="2">Secreted via type III secretion system 1 (SPI-1 T3SS), and delivered into the host cell.</text>
</comment>
<comment type="PTM">
    <text evidence="2">Ubiquitinated in the presence of host E1 ubiquitin-activating enzyme, E2 ubiquitin-conjugating enzyme and ubiquitin.</text>
</comment>
<comment type="similarity">
    <text evidence="4">Belongs to the SopA E3 ligase family.</text>
</comment>
<name>SOPA_SALA4</name>
<keyword id="KW-0964">Secreted</keyword>
<keyword id="KW-0808">Transferase</keyword>
<keyword id="KW-0832">Ubl conjugation</keyword>
<keyword id="KW-0833">Ubl conjugation pathway</keyword>
<keyword id="KW-0843">Virulence</keyword>
<organism>
    <name type="scientific">Salmonella agona (strain SL483)</name>
    <dbReference type="NCBI Taxonomy" id="454166"/>
    <lineage>
        <taxon>Bacteria</taxon>
        <taxon>Pseudomonadati</taxon>
        <taxon>Pseudomonadota</taxon>
        <taxon>Gammaproteobacteria</taxon>
        <taxon>Enterobacterales</taxon>
        <taxon>Enterobacteriaceae</taxon>
        <taxon>Salmonella</taxon>
    </lineage>
</organism>
<protein>
    <recommendedName>
        <fullName>E3 ubiquitin-protein ligase SopA</fullName>
        <ecNumber>2.3.2.26</ecNumber>
    </recommendedName>
    <alternativeName>
        <fullName evidence="4">HECT-type E3 ubiquitin transferase SopA</fullName>
    </alternativeName>
    <alternativeName>
        <fullName>Salmonella outer protein A</fullName>
    </alternativeName>
    <alternativeName>
        <fullName>Secreted effector protein SopA</fullName>
    </alternativeName>
</protein>
<accession>B5EX33</accession>